<comment type="function">
    <text evidence="1">Plays a central role in chromosome condensation, segregation and cell cycle progression. Functions as a homodimer, which is essential for chromosome partition. Involved in negative DNA supercoiling in vivo, and by this means organize and compact chromosomes. May achieve or facilitate chromosome segregation by condensation DNA from both sides of a centrally located replisome during cell division.</text>
</comment>
<comment type="subunit">
    <text evidence="1">Homodimerization via its hinge domain. Binds to DNA via its C-terminal region. Interacts, and probably forms a ternary complex, with MukE and MukF via its C-terminal region. The complex formation is stimulated by calcium or magnesium. Interacts with tubulin-related protein FtsZ.</text>
</comment>
<comment type="subcellular location">
    <subcellularLocation>
        <location evidence="1">Cytoplasm</location>
        <location evidence="1">Nucleoid</location>
    </subcellularLocation>
    <text evidence="1">Restricted to the nucleoid region.</text>
</comment>
<comment type="domain">
    <text evidence="1">The hinge domain, which separates the large intramolecular coiled coil regions, allows the homodimerization, forming a V-shaped homodimer.</text>
</comment>
<comment type="similarity">
    <text evidence="1">Belongs to the SMC family. MukB subfamily.</text>
</comment>
<protein>
    <recommendedName>
        <fullName evidence="1">Chromosome partition protein MukB</fullName>
    </recommendedName>
    <alternativeName>
        <fullName evidence="1">Structural maintenance of chromosome-related protein</fullName>
    </alternativeName>
</protein>
<name>MUKB_ECOUT</name>
<dbReference type="EMBL" id="CP000243">
    <property type="protein sequence ID" value="ABE06481.1"/>
    <property type="molecule type" value="Genomic_DNA"/>
</dbReference>
<dbReference type="RefSeq" id="WP_000572616.1">
    <property type="nucleotide sequence ID" value="NZ_CP064825.1"/>
</dbReference>
<dbReference type="SMR" id="Q1RDT3"/>
<dbReference type="KEGG" id="eci:UTI89_C0996"/>
<dbReference type="HOGENOM" id="CLU_004430_0_0_6"/>
<dbReference type="Proteomes" id="UP000001952">
    <property type="component" value="Chromosome"/>
</dbReference>
<dbReference type="GO" id="GO:0005737">
    <property type="term" value="C:cytoplasm"/>
    <property type="evidence" value="ECO:0007669"/>
    <property type="project" value="UniProtKB-UniRule"/>
</dbReference>
<dbReference type="GO" id="GO:0009295">
    <property type="term" value="C:nucleoid"/>
    <property type="evidence" value="ECO:0007669"/>
    <property type="project" value="UniProtKB-SubCell"/>
</dbReference>
<dbReference type="GO" id="GO:0005524">
    <property type="term" value="F:ATP binding"/>
    <property type="evidence" value="ECO:0007669"/>
    <property type="project" value="UniProtKB-UniRule"/>
</dbReference>
<dbReference type="GO" id="GO:0003677">
    <property type="term" value="F:DNA binding"/>
    <property type="evidence" value="ECO:0007669"/>
    <property type="project" value="UniProtKB-UniRule"/>
</dbReference>
<dbReference type="GO" id="GO:0051301">
    <property type="term" value="P:cell division"/>
    <property type="evidence" value="ECO:0007669"/>
    <property type="project" value="UniProtKB-KW"/>
</dbReference>
<dbReference type="GO" id="GO:0030261">
    <property type="term" value="P:chromosome condensation"/>
    <property type="evidence" value="ECO:0007669"/>
    <property type="project" value="UniProtKB-KW"/>
</dbReference>
<dbReference type="GO" id="GO:0007059">
    <property type="term" value="P:chromosome segregation"/>
    <property type="evidence" value="ECO:0007669"/>
    <property type="project" value="UniProtKB-UniRule"/>
</dbReference>
<dbReference type="GO" id="GO:0006260">
    <property type="term" value="P:DNA replication"/>
    <property type="evidence" value="ECO:0007669"/>
    <property type="project" value="UniProtKB-UniRule"/>
</dbReference>
<dbReference type="FunFam" id="1.20.58.850:FF:000001">
    <property type="entry name" value="Chromosome partition protein MukB"/>
    <property type="match status" value="1"/>
</dbReference>
<dbReference type="FunFam" id="3.30.70.3500:FF:000001">
    <property type="entry name" value="Chromosome partition protein MukB"/>
    <property type="match status" value="1"/>
</dbReference>
<dbReference type="FunFam" id="3.40.1140.10:FF:000001">
    <property type="entry name" value="Chromosome partition protein MukB"/>
    <property type="match status" value="1"/>
</dbReference>
<dbReference type="FunFam" id="3.40.1140.10:FF:000002">
    <property type="entry name" value="Chromosome partition protein MukB"/>
    <property type="match status" value="1"/>
</dbReference>
<dbReference type="Gene3D" id="1.10.287.1490">
    <property type="match status" value="1"/>
</dbReference>
<dbReference type="Gene3D" id="1.20.58.850">
    <property type="match status" value="1"/>
</dbReference>
<dbReference type="Gene3D" id="3.40.1140.10">
    <property type="match status" value="2"/>
</dbReference>
<dbReference type="Gene3D" id="1.20.5.420">
    <property type="entry name" value="Immunoglobulin FC, subunit C"/>
    <property type="match status" value="1"/>
</dbReference>
<dbReference type="Gene3D" id="3.30.70.3500">
    <property type="entry name" value="MukB, hinge domain"/>
    <property type="match status" value="1"/>
</dbReference>
<dbReference type="HAMAP" id="MF_01800">
    <property type="entry name" value="MukB"/>
    <property type="match status" value="1"/>
</dbReference>
<dbReference type="InterPro" id="IPR012090">
    <property type="entry name" value="MukB"/>
</dbReference>
<dbReference type="InterPro" id="IPR050308">
    <property type="entry name" value="MukB/SMC"/>
</dbReference>
<dbReference type="InterPro" id="IPR032520">
    <property type="entry name" value="MukB_hinge"/>
</dbReference>
<dbReference type="InterPro" id="IPR042501">
    <property type="entry name" value="MukB_hinge_sf"/>
</dbReference>
<dbReference type="InterPro" id="IPR007406">
    <property type="entry name" value="MukB_N_dom"/>
</dbReference>
<dbReference type="InterPro" id="IPR027417">
    <property type="entry name" value="P-loop_NTPase"/>
</dbReference>
<dbReference type="NCBIfam" id="NF003422">
    <property type="entry name" value="PRK04863.1"/>
    <property type="match status" value="1"/>
</dbReference>
<dbReference type="PANTHER" id="PTHR42963">
    <property type="entry name" value="CHROMOSOME PARTITION PROTEIN MUKB"/>
    <property type="match status" value="1"/>
</dbReference>
<dbReference type="PANTHER" id="PTHR42963:SF1">
    <property type="entry name" value="DUF4476 DOMAIN-CONTAINING PROTEIN"/>
    <property type="match status" value="1"/>
</dbReference>
<dbReference type="Pfam" id="PF04310">
    <property type="entry name" value="MukB"/>
    <property type="match status" value="1"/>
</dbReference>
<dbReference type="Pfam" id="PF16330">
    <property type="entry name" value="MukB_hinge"/>
    <property type="match status" value="1"/>
</dbReference>
<dbReference type="Pfam" id="PF13558">
    <property type="entry name" value="SbcC_Walker_B"/>
    <property type="match status" value="1"/>
</dbReference>
<dbReference type="PIRSF" id="PIRSF005246">
    <property type="entry name" value="MukB"/>
    <property type="match status" value="1"/>
</dbReference>
<dbReference type="SUPFAM" id="SSF52540">
    <property type="entry name" value="P-loop containing nucleoside triphosphate hydrolases"/>
    <property type="match status" value="2"/>
</dbReference>
<gene>
    <name evidence="1" type="primary">mukB</name>
    <name type="ordered locus">UTI89_C0996</name>
</gene>
<evidence type="ECO:0000255" key="1">
    <source>
        <dbReference type="HAMAP-Rule" id="MF_01800"/>
    </source>
</evidence>
<sequence>MIERGKFRSLTLINWNGFFARTFDLDELVTTLSGGNGAGKSTTMAAFVTALIPDLTLLHFRNTTEAGATSGSRDKGLHGKLKAGVCYSMLDTINSHHQRVVVGVRLQQVAGRDRKVDIKPFAIQGLPMSVQPTQLVTETLNERQARVLPLNELKDKLEAMEGVQFKQFNSITDYHSLMFDLGIIARRLRSASDRSKFYRLIEASLYGGISSAITRSLRDYLLPENSGVRKAFQDMEAALRENRMTLEAIRVTQSDRDLFKHLISEATNYVAADYMRHANERRVHLDKALEFRRELHTSRKQLAAEQYKHVDMARELAEHNGAEGDLEADYQAASDHLNLVQTALRQQEKIERYEADLDELQIRLEEQNEVVAEAIERQEENEARAEAAELEVDELKSQLADYQQALDVQQTRAIQYNQAIAALNRAKELCHLPDLTADSAAEWLETFQAKELEATEKMLSLEQKMSMAQTAHSQFEQAYQLVVAINGPLARNEAWDVARELLREGVDQRHLAEQVQPLRMRLSELEQRLREQQEAERLLADFCKRQGKNFDIDELEALHQELEARIASLSDSVSNAREERMALRQEQEQLQSRIQSLMQRAPVWLAAQNSLNQLSEQCGEEFTSSQDVTEFLQQLLEREREAIVERDEVGARKNAVDEEIERLSQPGGSEDQRLNALAERFGGVLLSEIYDDVSLEDAPYFSALYGPSRHAIVVPDLSQVTEHLEGLTDCPEDLYLIEGDPQSFDDSVFSVDELEKAVVVKIADRQWRYSRFPEVPLFGRAARESRIESLHAEREVLSERFATLSFDVQKTQRLHQAFSRFIGSHLAVAFESDPEAEIRQLNSRRVELERALSNHENDNQQQRIQFEQAKEGVTALNRILPRLNLLADDSLADRVDEIRERLDEAQEAARFVQQFGNQLAKLEPIVSVLQSDPEQFEQLKEDYAYSQQMQRDARQQAFALTEVVQRRAHFSYSDSAEMLSGNSDLNEKLRERLEQAEAERTRAREALRGHAAQLNQYNQVLASLKSSYDTKKELLNDLQRELQDIGVRADSGAEERARIRRDELHAQLSNNRSRRNQLEKALTFCEAEMDNLTRKLRKLERDYFEMREQVVTAKAGWCAVMRMVKDNGVERRLHRRELAYLSADDLRSMSDKALGALRLAVADNEHLRDVLRMSEDPKRPERKIQFFVAVYQHLRERIRQDIIRTDDPVEAIEQMEIELSRLTEELTSREQKLAISSRSVANIIRKTIQREQNRIRMLNQGLQNVSFGQVNSVRLNVNVRETHAMLLDVLSEQHEQHQDLFNSNRLTFSEALAKLYQRLNPQIDMGQRTPQTIGEELLDYRNYLEMEVEVNRGSDGWLRAESGALSTGEAIGTGMSILVMVVQSWEDESRRLRGKDISPCRLLFLDEAARLDARSIATLFELCERLQMQLIIAAPENISPEKGTTYKLVRKVFQNTEHVHVVGLRGFAPQLPETLPGSDEAPSQAS</sequence>
<proteinExistence type="inferred from homology"/>
<accession>Q1RDT3</accession>
<keyword id="KW-0067">ATP-binding</keyword>
<keyword id="KW-0131">Cell cycle</keyword>
<keyword id="KW-0132">Cell division</keyword>
<keyword id="KW-0159">Chromosome partition</keyword>
<keyword id="KW-0175">Coiled coil</keyword>
<keyword id="KW-0963">Cytoplasm</keyword>
<keyword id="KW-0226">DNA condensation</keyword>
<keyword id="KW-0238">DNA-binding</keyword>
<keyword id="KW-0547">Nucleotide-binding</keyword>
<organism>
    <name type="scientific">Escherichia coli (strain UTI89 / UPEC)</name>
    <dbReference type="NCBI Taxonomy" id="364106"/>
    <lineage>
        <taxon>Bacteria</taxon>
        <taxon>Pseudomonadati</taxon>
        <taxon>Pseudomonadota</taxon>
        <taxon>Gammaproteobacteria</taxon>
        <taxon>Enterobacterales</taxon>
        <taxon>Enterobacteriaceae</taxon>
        <taxon>Escherichia</taxon>
    </lineage>
</organism>
<reference key="1">
    <citation type="journal article" date="2006" name="Proc. Natl. Acad. Sci. U.S.A.">
        <title>Identification of genes subject to positive selection in uropathogenic strains of Escherichia coli: a comparative genomics approach.</title>
        <authorList>
            <person name="Chen S.L."/>
            <person name="Hung C.-S."/>
            <person name="Xu J."/>
            <person name="Reigstad C.S."/>
            <person name="Magrini V."/>
            <person name="Sabo A."/>
            <person name="Blasiar D."/>
            <person name="Bieri T."/>
            <person name="Meyer R.R."/>
            <person name="Ozersky P."/>
            <person name="Armstrong J.R."/>
            <person name="Fulton R.S."/>
            <person name="Latreille J.P."/>
            <person name="Spieth J."/>
            <person name="Hooton T.M."/>
            <person name="Mardis E.R."/>
            <person name="Hultgren S.J."/>
            <person name="Gordon J.I."/>
        </authorList>
    </citation>
    <scope>NUCLEOTIDE SEQUENCE [LARGE SCALE GENOMIC DNA]</scope>
    <source>
        <strain>UTI89 / UPEC</strain>
    </source>
</reference>
<feature type="chain" id="PRO_1000069905" description="Chromosome partition protein MukB">
    <location>
        <begin position="1"/>
        <end position="1486"/>
    </location>
</feature>
<feature type="region of interest" description="Flexible hinge" evidence="1">
    <location>
        <begin position="666"/>
        <end position="783"/>
    </location>
</feature>
<feature type="coiled-coil region" evidence="1">
    <location>
        <begin position="326"/>
        <end position="418"/>
    </location>
</feature>
<feature type="coiled-coil region" evidence="1">
    <location>
        <begin position="444"/>
        <end position="480"/>
    </location>
</feature>
<feature type="coiled-coil region" evidence="1">
    <location>
        <begin position="509"/>
        <end position="603"/>
    </location>
</feature>
<feature type="coiled-coil region" evidence="1">
    <location>
        <begin position="835"/>
        <end position="923"/>
    </location>
</feature>
<feature type="coiled-coil region" evidence="1">
    <location>
        <begin position="977"/>
        <end position="1115"/>
    </location>
</feature>
<feature type="coiled-coil region" evidence="1">
    <location>
        <begin position="1209"/>
        <end position="1266"/>
    </location>
</feature>
<feature type="binding site" evidence="1">
    <location>
        <begin position="34"/>
        <end position="41"/>
    </location>
    <ligand>
        <name>ATP</name>
        <dbReference type="ChEBI" id="CHEBI:30616"/>
    </ligand>
</feature>